<evidence type="ECO:0000255" key="1">
    <source>
        <dbReference type="HAMAP-Rule" id="MF_00562"/>
    </source>
</evidence>
<comment type="function">
    <text evidence="1">D-aminoacyl-tRNA deacylase with broad substrate specificity. By recycling D-aminoacyl-tRNA to D-amino acids and free tRNA molecules, this enzyme counteracts the toxicity associated with the formation of D-aminoacyl-tRNA entities in vivo.</text>
</comment>
<comment type="catalytic activity">
    <reaction evidence="1">
        <text>a D-aminoacyl-tRNA + H2O = a tRNA + a D-alpha-amino acid + H(+)</text>
        <dbReference type="Rhea" id="RHEA:13953"/>
        <dbReference type="Rhea" id="RHEA-COMP:10123"/>
        <dbReference type="Rhea" id="RHEA-COMP:10124"/>
        <dbReference type="ChEBI" id="CHEBI:15377"/>
        <dbReference type="ChEBI" id="CHEBI:15378"/>
        <dbReference type="ChEBI" id="CHEBI:59871"/>
        <dbReference type="ChEBI" id="CHEBI:78442"/>
        <dbReference type="ChEBI" id="CHEBI:79333"/>
        <dbReference type="EC" id="3.1.1.96"/>
    </reaction>
</comment>
<comment type="catalytic activity">
    <reaction evidence="1">
        <text>glycyl-tRNA(Ala) + H2O = tRNA(Ala) + glycine + H(+)</text>
        <dbReference type="Rhea" id="RHEA:53744"/>
        <dbReference type="Rhea" id="RHEA-COMP:9657"/>
        <dbReference type="Rhea" id="RHEA-COMP:13640"/>
        <dbReference type="ChEBI" id="CHEBI:15377"/>
        <dbReference type="ChEBI" id="CHEBI:15378"/>
        <dbReference type="ChEBI" id="CHEBI:57305"/>
        <dbReference type="ChEBI" id="CHEBI:78442"/>
        <dbReference type="ChEBI" id="CHEBI:78522"/>
        <dbReference type="EC" id="3.1.1.96"/>
    </reaction>
</comment>
<comment type="cofactor">
    <cofactor evidence="1">
        <name>Zn(2+)</name>
        <dbReference type="ChEBI" id="CHEBI:29105"/>
    </cofactor>
    <text evidence="1">Binds 2 Zn(2+) ions per subunit.</text>
</comment>
<comment type="subunit">
    <text evidence="1">Monomer.</text>
</comment>
<comment type="similarity">
    <text evidence="1">Belongs to the DtdA deacylase family.</text>
</comment>
<proteinExistence type="inferred from homology"/>
<organism>
    <name type="scientific">Pyrobaculum aerophilum (strain ATCC 51768 / DSM 7523 / JCM 9630 / CIP 104966 / NBRC 100827 / IM2)</name>
    <dbReference type="NCBI Taxonomy" id="178306"/>
    <lineage>
        <taxon>Archaea</taxon>
        <taxon>Thermoproteota</taxon>
        <taxon>Thermoprotei</taxon>
        <taxon>Thermoproteales</taxon>
        <taxon>Thermoproteaceae</taxon>
        <taxon>Pyrobaculum</taxon>
    </lineage>
</organism>
<protein>
    <recommendedName>
        <fullName evidence="1">D-aminoacyl-tRNA deacylase</fullName>
        <ecNumber evidence="1">3.1.1.96</ecNumber>
    </recommendedName>
    <alternativeName>
        <fullName>D-tyrosyl-tRNA(Tyr) deacylase</fullName>
    </alternativeName>
</protein>
<reference key="1">
    <citation type="journal article" date="2002" name="Proc. Natl. Acad. Sci. U.S.A.">
        <title>Genome sequence of the hyperthermophilic crenarchaeon Pyrobaculum aerophilum.</title>
        <authorList>
            <person name="Fitz-Gibbon S.T."/>
            <person name="Ladner H."/>
            <person name="Kim U.-J."/>
            <person name="Stetter K.O."/>
            <person name="Simon M.I."/>
            <person name="Miller J.H."/>
        </authorList>
    </citation>
    <scope>NUCLEOTIDE SEQUENCE [LARGE SCALE GENOMIC DNA]</scope>
    <source>
        <strain>ATCC 51768 / DSM 7523 / JCM 9630 / CIP 104966 / NBRC 100827 / IM2</strain>
    </source>
</reference>
<keyword id="KW-0378">Hydrolase</keyword>
<keyword id="KW-0479">Metal-binding</keyword>
<keyword id="KW-1185">Reference proteome</keyword>
<keyword id="KW-0862">Zinc</keyword>
<dbReference type="EC" id="3.1.1.96" evidence="1"/>
<dbReference type="EMBL" id="AE009441">
    <property type="protein sequence ID" value="AAL64116.1"/>
    <property type="molecule type" value="Genomic_DNA"/>
</dbReference>
<dbReference type="RefSeq" id="WP_011008584.1">
    <property type="nucleotide sequence ID" value="NC_003364.1"/>
</dbReference>
<dbReference type="SMR" id="Q8ZVE0"/>
<dbReference type="FunCoup" id="Q8ZVE0">
    <property type="interactions" value="4"/>
</dbReference>
<dbReference type="STRING" id="178306.PAE2331"/>
<dbReference type="EnsemblBacteria" id="AAL64116">
    <property type="protein sequence ID" value="AAL64116"/>
    <property type="gene ID" value="PAE2331"/>
</dbReference>
<dbReference type="GeneID" id="1464452"/>
<dbReference type="KEGG" id="pai:PAE2331"/>
<dbReference type="PATRIC" id="fig|178306.9.peg.1737"/>
<dbReference type="eggNOG" id="arCOG01616">
    <property type="taxonomic scope" value="Archaea"/>
</dbReference>
<dbReference type="HOGENOM" id="CLU_056464_1_0_2"/>
<dbReference type="InParanoid" id="Q8ZVE0"/>
<dbReference type="Proteomes" id="UP000002439">
    <property type="component" value="Chromosome"/>
</dbReference>
<dbReference type="GO" id="GO:0051499">
    <property type="term" value="F:D-aminoacyl-tRNA deacylase activity"/>
    <property type="evidence" value="ECO:0000318"/>
    <property type="project" value="GO_Central"/>
</dbReference>
<dbReference type="GO" id="GO:0008270">
    <property type="term" value="F:zinc ion binding"/>
    <property type="evidence" value="ECO:0007669"/>
    <property type="project" value="UniProtKB-UniRule"/>
</dbReference>
<dbReference type="GO" id="GO:0019478">
    <property type="term" value="P:D-amino acid catabolic process"/>
    <property type="evidence" value="ECO:0007669"/>
    <property type="project" value="UniProtKB-UniRule"/>
</dbReference>
<dbReference type="Gene3D" id="3.40.50.10700">
    <property type="entry name" value="AF0625-like"/>
    <property type="match status" value="1"/>
</dbReference>
<dbReference type="Gene3D" id="3.40.630.50">
    <property type="entry name" value="AF0625-like"/>
    <property type="match status" value="1"/>
</dbReference>
<dbReference type="HAMAP" id="MF_00562">
    <property type="entry name" value="Deacylase_DtdA"/>
    <property type="match status" value="1"/>
</dbReference>
<dbReference type="InterPro" id="IPR018033">
    <property type="entry name" value="Deacylase_DtdA_archaea"/>
</dbReference>
<dbReference type="InterPro" id="IPR007508">
    <property type="entry name" value="DtdA"/>
</dbReference>
<dbReference type="PANTHER" id="PTHR34667">
    <property type="entry name" value="D-AMINOACYL-TRNA DEACYLASE"/>
    <property type="match status" value="1"/>
</dbReference>
<dbReference type="PANTHER" id="PTHR34667:SF1">
    <property type="entry name" value="D-AMINOACYL-TRNA DEACYLASE"/>
    <property type="match status" value="1"/>
</dbReference>
<dbReference type="Pfam" id="PF04414">
    <property type="entry name" value="tRNA_deacylase"/>
    <property type="match status" value="1"/>
</dbReference>
<dbReference type="PIRSF" id="PIRSF016210">
    <property type="entry name" value="UCP016210"/>
    <property type="match status" value="1"/>
</dbReference>
<dbReference type="SUPFAM" id="SSF142535">
    <property type="entry name" value="AF0625-like"/>
    <property type="match status" value="1"/>
</dbReference>
<gene>
    <name evidence="1" type="primary">dtdA</name>
    <name type="ordered locus">PAE2331</name>
</gene>
<name>DTDA_PYRAE</name>
<sequence length="251" mass="28126">MYVLVLSLGDPVSRTFLELHPMPLVETRGDIEVRKYGEIPAVVYKGEPTEFYREDILASLGKYAIFISRHEMSNPRPLFTVHTPGSWPDVSVANPRLASALFRALCKHAYEPFECAFEATHHAPNTSLVSATFIEVGSTEAEWRDKRAVGVLAQALEEALTKEFEGPTPTMAIGDLHYVTISDSVLRGEFDLGHVVPKYINITTNIVENILKKHTISIKKTIIFRKNIKNPIRTEIIELLRAKGIEVTLKG</sequence>
<accession>Q8ZVE0</accession>
<feature type="chain" id="PRO_0000158970" description="D-aminoacyl-tRNA deacylase">
    <location>
        <begin position="1"/>
        <end position="251"/>
    </location>
</feature>